<name>P2RY2_MERUN</name>
<accession>Q99PE3</accession>
<dbReference type="EMBL" id="AF313448">
    <property type="protein sequence ID" value="AAK07561.1"/>
    <property type="molecule type" value="mRNA"/>
</dbReference>
<dbReference type="SMR" id="Q99PE3"/>
<dbReference type="GO" id="GO:0005886">
    <property type="term" value="C:plasma membrane"/>
    <property type="evidence" value="ECO:0007669"/>
    <property type="project" value="UniProtKB-SubCell"/>
</dbReference>
<dbReference type="GO" id="GO:0031686">
    <property type="term" value="F:A1 adenosine receptor binding"/>
    <property type="evidence" value="ECO:0007669"/>
    <property type="project" value="TreeGrafter"/>
</dbReference>
<dbReference type="GO" id="GO:0045030">
    <property type="term" value="F:G protein-coupled UTP receptor activity"/>
    <property type="evidence" value="ECO:0007669"/>
    <property type="project" value="TreeGrafter"/>
</dbReference>
<dbReference type="Gene3D" id="1.20.1070.10">
    <property type="entry name" value="Rhodopsin 7-helix transmembrane proteins"/>
    <property type="match status" value="1"/>
</dbReference>
<dbReference type="InterPro" id="IPR000276">
    <property type="entry name" value="GPCR_Rhodpsn"/>
</dbReference>
<dbReference type="InterPro" id="IPR017452">
    <property type="entry name" value="GPCR_Rhodpsn_7TM"/>
</dbReference>
<dbReference type="PANTHER" id="PTHR24231:SF17">
    <property type="entry name" value="P2Y PURINOCEPTOR 2"/>
    <property type="match status" value="1"/>
</dbReference>
<dbReference type="PANTHER" id="PTHR24231">
    <property type="entry name" value="PURINOCEPTOR-RELATED G-PROTEIN COUPLED RECEPTOR"/>
    <property type="match status" value="1"/>
</dbReference>
<dbReference type="Pfam" id="PF00001">
    <property type="entry name" value="7tm_1"/>
    <property type="match status" value="1"/>
</dbReference>
<dbReference type="PRINTS" id="PR01157">
    <property type="entry name" value="P2YPURNOCPTR"/>
</dbReference>
<dbReference type="SUPFAM" id="SSF81321">
    <property type="entry name" value="Family A G protein-coupled receptor-like"/>
    <property type="match status" value="1"/>
</dbReference>
<dbReference type="PROSITE" id="PS50262">
    <property type="entry name" value="G_PROTEIN_RECEP_F1_2"/>
    <property type="match status" value="1"/>
</dbReference>
<protein>
    <recommendedName>
        <fullName>P2Y purinoceptor 2</fullName>
        <shortName>P2Y2</shortName>
    </recommendedName>
</protein>
<sequence length="82" mass="9365">LPLSYGVVCVLGLCLNVVALYIFLCRLKTWNASTTYMFHLAVSDSLYAASLPLLVYYYAQGDHWPFSTVLCKLVRFLFYTNL</sequence>
<feature type="chain" id="PRO_0000070014" description="P2Y purinoceptor 2">
    <location>
        <begin position="1" status="less than"/>
        <end position="82" status="greater than"/>
    </location>
</feature>
<feature type="transmembrane region" description="Helical; Name=1" evidence="1">
    <location>
        <begin position="1" status="less than"/>
        <end position="25"/>
    </location>
</feature>
<feature type="topological domain" description="Cytoplasmic" evidence="1">
    <location>
        <begin position="26"/>
        <end position="35"/>
    </location>
</feature>
<feature type="transmembrane region" description="Helical; Name=2" evidence="1">
    <location>
        <begin position="36"/>
        <end position="56"/>
    </location>
</feature>
<feature type="topological domain" description="Extracellular" evidence="1">
    <location>
        <begin position="57"/>
        <end position="75"/>
    </location>
</feature>
<feature type="transmembrane region" description="Helical; Name=3" evidence="1">
    <location>
        <begin position="76"/>
        <end position="82" status="greater than"/>
    </location>
</feature>
<feature type="non-terminal residue">
    <location>
        <position position="1"/>
    </location>
</feature>
<feature type="non-terminal residue">
    <location>
        <position position="82"/>
    </location>
</feature>
<keyword id="KW-1003">Cell membrane</keyword>
<keyword id="KW-0297">G-protein coupled receptor</keyword>
<keyword id="KW-0472">Membrane</keyword>
<keyword id="KW-0675">Receptor</keyword>
<keyword id="KW-0807">Transducer</keyword>
<keyword id="KW-0812">Transmembrane</keyword>
<keyword id="KW-1133">Transmembrane helix</keyword>
<evidence type="ECO:0000255" key="1"/>
<evidence type="ECO:0000255" key="2">
    <source>
        <dbReference type="PROSITE-ProRule" id="PRU00521"/>
    </source>
</evidence>
<gene>
    <name type="primary">P2RY2</name>
</gene>
<organism>
    <name type="scientific">Meriones unguiculatus</name>
    <name type="common">Mongolian jird</name>
    <name type="synonym">Gerbillus unguiculatus</name>
    <dbReference type="NCBI Taxonomy" id="10047"/>
    <lineage>
        <taxon>Eukaryota</taxon>
        <taxon>Metazoa</taxon>
        <taxon>Chordata</taxon>
        <taxon>Craniata</taxon>
        <taxon>Vertebrata</taxon>
        <taxon>Euteleostomi</taxon>
        <taxon>Mammalia</taxon>
        <taxon>Eutheria</taxon>
        <taxon>Euarchontoglires</taxon>
        <taxon>Glires</taxon>
        <taxon>Rodentia</taxon>
        <taxon>Myomorpha</taxon>
        <taxon>Muroidea</taxon>
        <taxon>Muridae</taxon>
        <taxon>Gerbillinae</taxon>
        <taxon>Meriones</taxon>
    </lineage>
</organism>
<proteinExistence type="evidence at transcript level"/>
<comment type="function">
    <text>Receptor for ATP and UTP coupled to G-proteins that activate a phosphatidylinositol-calcium second messenger system. Not activated by UDP.</text>
</comment>
<comment type="subcellular location">
    <subcellularLocation>
        <location>Cell membrane</location>
        <topology>Multi-pass membrane protein</topology>
    </subcellularLocation>
</comment>
<comment type="tissue specificity">
    <text>Expressed in brain, heart, stria vascularis and vestibular labyrinth.</text>
</comment>
<comment type="similarity">
    <text evidence="2">Belongs to the G-protein coupled receptor 1 family.</text>
</comment>
<reference key="1">
    <citation type="journal article" date="2001" name="Am. J. Physiol.">
        <title>Apical P2Y4 purinergic receptor controls K+ secretion by vestibular dark cell epithelium.</title>
        <authorList>
            <person name="Marcus D.C."/>
            <person name="Scofield M.A."/>
        </authorList>
    </citation>
    <scope>NUCLEOTIDE SEQUENCE [MRNA]</scope>
    <source>
        <tissue>Inner ear</tissue>
    </source>
</reference>